<keyword id="KW-1003">Cell membrane</keyword>
<keyword id="KW-0472">Membrane</keyword>
<keyword id="KW-0812">Transmembrane</keyword>
<keyword id="KW-1133">Transmembrane helix</keyword>
<evidence type="ECO:0000255" key="1"/>
<evidence type="ECO:0000305" key="2"/>
<name>Y1574_STAES</name>
<accession>Q8CRU8</accession>
<protein>
    <recommendedName>
        <fullName>UPF0421 protein SE_1574</fullName>
    </recommendedName>
</protein>
<reference key="1">
    <citation type="journal article" date="2003" name="Mol. Microbiol.">
        <title>Genome-based analysis of virulence genes in a non-biofilm-forming Staphylococcus epidermidis strain (ATCC 12228).</title>
        <authorList>
            <person name="Zhang Y.-Q."/>
            <person name="Ren S.-X."/>
            <person name="Li H.-L."/>
            <person name="Wang Y.-X."/>
            <person name="Fu G."/>
            <person name="Yang J."/>
            <person name="Qin Z.-Q."/>
            <person name="Miao Y.-G."/>
            <person name="Wang W.-Y."/>
            <person name="Chen R.-S."/>
            <person name="Shen Y."/>
            <person name="Chen Z."/>
            <person name="Yuan Z.-H."/>
            <person name="Zhao G.-P."/>
            <person name="Qu D."/>
            <person name="Danchin A."/>
            <person name="Wen Y.-M."/>
        </authorList>
    </citation>
    <scope>NUCLEOTIDE SEQUENCE [LARGE SCALE GENOMIC DNA]</scope>
    <source>
        <strain>ATCC 12228 / FDA PCI 1200</strain>
    </source>
</reference>
<sequence length="328" mass="37381">MNDKWYRHIIGARTIKTGLATFFTSLFCMLLNLTPIFAILTAIVTIEPTAKASLKKGYKRLPATVIGALFAVVFTYVFGDQSPLSYALSATFTILICTKLNLQVGTTVAVLTSVAMIPSIHEAYVFNFFSRLLTALIGLVTAGLVNFIILPPKYYHQLEEQLALSEKKMYRLFYERCNELLLGKFSSEKTSKELSKLNIIAQKVETLMSYQRDELHYHKNEDNWKLLNRLTNRAYNNRLFISHLSNIIYLPKHTSIAFDANEKIALINISNSINGIIQKGSFARQKKSIATLKSSVKQMDEFDQNQMKSTLIYEILLIYKILDSRYAK</sequence>
<dbReference type="EMBL" id="AE015929">
    <property type="protein sequence ID" value="AAO05173.1"/>
    <property type="molecule type" value="Genomic_DNA"/>
</dbReference>
<dbReference type="RefSeq" id="NP_765129.1">
    <property type="nucleotide sequence ID" value="NC_004461.1"/>
</dbReference>
<dbReference type="RefSeq" id="WP_011082745.1">
    <property type="nucleotide sequence ID" value="NC_004461.1"/>
</dbReference>
<dbReference type="SMR" id="Q8CRU8"/>
<dbReference type="KEGG" id="sep:SE_1574"/>
<dbReference type="PATRIC" id="fig|176280.10.peg.1538"/>
<dbReference type="eggNOG" id="COG4129">
    <property type="taxonomic scope" value="Bacteria"/>
</dbReference>
<dbReference type="HOGENOM" id="CLU_067028_0_0_9"/>
<dbReference type="OrthoDB" id="2690036at2"/>
<dbReference type="Proteomes" id="UP000001411">
    <property type="component" value="Chromosome"/>
</dbReference>
<dbReference type="GO" id="GO:0005886">
    <property type="term" value="C:plasma membrane"/>
    <property type="evidence" value="ECO:0007669"/>
    <property type="project" value="UniProtKB-SubCell"/>
</dbReference>
<dbReference type="InterPro" id="IPR010343">
    <property type="entry name" value="ArAE_1"/>
</dbReference>
<dbReference type="PANTHER" id="PTHR30509:SF9">
    <property type="entry name" value="MULTIDRUG RESISTANCE PROTEIN MDTO"/>
    <property type="match status" value="1"/>
</dbReference>
<dbReference type="PANTHER" id="PTHR30509">
    <property type="entry name" value="P-HYDROXYBENZOIC ACID EFFLUX PUMP SUBUNIT-RELATED"/>
    <property type="match status" value="1"/>
</dbReference>
<dbReference type="Pfam" id="PF06081">
    <property type="entry name" value="ArAE_1"/>
    <property type="match status" value="1"/>
</dbReference>
<proteinExistence type="inferred from homology"/>
<feature type="chain" id="PRO_0000283024" description="UPF0421 protein SE_1574">
    <location>
        <begin position="1"/>
        <end position="328"/>
    </location>
</feature>
<feature type="transmembrane region" description="Helical" evidence="1">
    <location>
        <begin position="26"/>
        <end position="46"/>
    </location>
</feature>
<feature type="transmembrane region" description="Helical" evidence="1">
    <location>
        <begin position="61"/>
        <end position="81"/>
    </location>
</feature>
<feature type="transmembrane region" description="Helical" evidence="1">
    <location>
        <begin position="109"/>
        <end position="129"/>
    </location>
</feature>
<feature type="transmembrane region" description="Helical" evidence="1">
    <location>
        <begin position="132"/>
        <end position="152"/>
    </location>
</feature>
<comment type="subcellular location">
    <subcellularLocation>
        <location evidence="2">Cell membrane</location>
        <topology evidence="2">Multi-pass membrane protein</topology>
    </subcellularLocation>
</comment>
<comment type="similarity">
    <text evidence="2">Belongs to the UPF0421 family.</text>
</comment>
<gene>
    <name type="ordered locus">SE_1574</name>
</gene>
<organism>
    <name type="scientific">Staphylococcus epidermidis (strain ATCC 12228 / FDA PCI 1200)</name>
    <dbReference type="NCBI Taxonomy" id="176280"/>
    <lineage>
        <taxon>Bacteria</taxon>
        <taxon>Bacillati</taxon>
        <taxon>Bacillota</taxon>
        <taxon>Bacilli</taxon>
        <taxon>Bacillales</taxon>
        <taxon>Staphylococcaceae</taxon>
        <taxon>Staphylococcus</taxon>
    </lineage>
</organism>